<evidence type="ECO:0000255" key="1">
    <source>
        <dbReference type="HAMAP-Rule" id="MF_00365"/>
    </source>
</evidence>
<proteinExistence type="inferred from homology"/>
<feature type="chain" id="PRO_1000048591" description="DNA replication and repair protein RecF">
    <location>
        <begin position="1"/>
        <end position="364"/>
    </location>
</feature>
<feature type="binding site" evidence="1">
    <location>
        <begin position="30"/>
        <end position="37"/>
    </location>
    <ligand>
        <name>ATP</name>
        <dbReference type="ChEBI" id="CHEBI:30616"/>
    </ligand>
</feature>
<organism>
    <name type="scientific">Streptococcus suis (strain 05ZYH33)</name>
    <dbReference type="NCBI Taxonomy" id="391295"/>
    <lineage>
        <taxon>Bacteria</taxon>
        <taxon>Bacillati</taxon>
        <taxon>Bacillota</taxon>
        <taxon>Bacilli</taxon>
        <taxon>Lactobacillales</taxon>
        <taxon>Streptococcaceae</taxon>
        <taxon>Streptococcus</taxon>
    </lineage>
</organism>
<comment type="function">
    <text evidence="1">The RecF protein is involved in DNA metabolism; it is required for DNA replication and normal SOS inducibility. RecF binds preferentially to single-stranded, linear DNA. It also seems to bind ATP.</text>
</comment>
<comment type="subcellular location">
    <subcellularLocation>
        <location evidence="1">Cytoplasm</location>
    </subcellularLocation>
</comment>
<comment type="similarity">
    <text evidence="1">Belongs to the RecF family.</text>
</comment>
<accession>A4VYF9</accession>
<name>RECF_STRSY</name>
<keyword id="KW-0067">ATP-binding</keyword>
<keyword id="KW-0963">Cytoplasm</keyword>
<keyword id="KW-0227">DNA damage</keyword>
<keyword id="KW-0234">DNA repair</keyword>
<keyword id="KW-0235">DNA replication</keyword>
<keyword id="KW-0238">DNA-binding</keyword>
<keyword id="KW-0547">Nucleotide-binding</keyword>
<keyword id="KW-0742">SOS response</keyword>
<dbReference type="EMBL" id="CP000407">
    <property type="protein sequence ID" value="ABP91148.1"/>
    <property type="molecule type" value="Genomic_DNA"/>
</dbReference>
<dbReference type="SMR" id="A4VYF9"/>
<dbReference type="STRING" id="391295.SSU05_2182"/>
<dbReference type="KEGG" id="ssu:SSU05_2182"/>
<dbReference type="eggNOG" id="COG1195">
    <property type="taxonomic scope" value="Bacteria"/>
</dbReference>
<dbReference type="HOGENOM" id="CLU_040267_0_1_9"/>
<dbReference type="GO" id="GO:0005737">
    <property type="term" value="C:cytoplasm"/>
    <property type="evidence" value="ECO:0007669"/>
    <property type="project" value="UniProtKB-SubCell"/>
</dbReference>
<dbReference type="GO" id="GO:0005524">
    <property type="term" value="F:ATP binding"/>
    <property type="evidence" value="ECO:0007669"/>
    <property type="project" value="UniProtKB-UniRule"/>
</dbReference>
<dbReference type="GO" id="GO:0003697">
    <property type="term" value="F:single-stranded DNA binding"/>
    <property type="evidence" value="ECO:0007669"/>
    <property type="project" value="UniProtKB-UniRule"/>
</dbReference>
<dbReference type="GO" id="GO:0006260">
    <property type="term" value="P:DNA replication"/>
    <property type="evidence" value="ECO:0007669"/>
    <property type="project" value="UniProtKB-UniRule"/>
</dbReference>
<dbReference type="GO" id="GO:0000731">
    <property type="term" value="P:DNA synthesis involved in DNA repair"/>
    <property type="evidence" value="ECO:0007669"/>
    <property type="project" value="TreeGrafter"/>
</dbReference>
<dbReference type="GO" id="GO:0006302">
    <property type="term" value="P:double-strand break repair"/>
    <property type="evidence" value="ECO:0007669"/>
    <property type="project" value="TreeGrafter"/>
</dbReference>
<dbReference type="GO" id="GO:0009432">
    <property type="term" value="P:SOS response"/>
    <property type="evidence" value="ECO:0007669"/>
    <property type="project" value="UniProtKB-UniRule"/>
</dbReference>
<dbReference type="CDD" id="cd03242">
    <property type="entry name" value="ABC_RecF"/>
    <property type="match status" value="1"/>
</dbReference>
<dbReference type="FunFam" id="1.20.1050.90:FF:000002">
    <property type="entry name" value="DNA replication and repair protein RecF"/>
    <property type="match status" value="1"/>
</dbReference>
<dbReference type="Gene3D" id="3.40.50.300">
    <property type="entry name" value="P-loop containing nucleotide triphosphate hydrolases"/>
    <property type="match status" value="1"/>
</dbReference>
<dbReference type="Gene3D" id="1.20.1050.90">
    <property type="entry name" value="RecF/RecN/SMC, N-terminal domain"/>
    <property type="match status" value="1"/>
</dbReference>
<dbReference type="HAMAP" id="MF_00365">
    <property type="entry name" value="RecF"/>
    <property type="match status" value="1"/>
</dbReference>
<dbReference type="InterPro" id="IPR001238">
    <property type="entry name" value="DNA-binding_RecF"/>
</dbReference>
<dbReference type="InterPro" id="IPR018078">
    <property type="entry name" value="DNA-binding_RecF_CS"/>
</dbReference>
<dbReference type="InterPro" id="IPR027417">
    <property type="entry name" value="P-loop_NTPase"/>
</dbReference>
<dbReference type="InterPro" id="IPR003395">
    <property type="entry name" value="RecF/RecN/SMC_N"/>
</dbReference>
<dbReference type="InterPro" id="IPR042174">
    <property type="entry name" value="RecF_2"/>
</dbReference>
<dbReference type="NCBIfam" id="TIGR00611">
    <property type="entry name" value="recf"/>
    <property type="match status" value="1"/>
</dbReference>
<dbReference type="PANTHER" id="PTHR32182">
    <property type="entry name" value="DNA REPLICATION AND REPAIR PROTEIN RECF"/>
    <property type="match status" value="1"/>
</dbReference>
<dbReference type="PANTHER" id="PTHR32182:SF0">
    <property type="entry name" value="DNA REPLICATION AND REPAIR PROTEIN RECF"/>
    <property type="match status" value="1"/>
</dbReference>
<dbReference type="Pfam" id="PF02463">
    <property type="entry name" value="SMC_N"/>
    <property type="match status" value="1"/>
</dbReference>
<dbReference type="SUPFAM" id="SSF52540">
    <property type="entry name" value="P-loop containing nucleoside triphosphate hydrolases"/>
    <property type="match status" value="1"/>
</dbReference>
<dbReference type="PROSITE" id="PS00617">
    <property type="entry name" value="RECF_1"/>
    <property type="match status" value="1"/>
</dbReference>
<dbReference type="PROSITE" id="PS00618">
    <property type="entry name" value="RECF_2"/>
    <property type="match status" value="1"/>
</dbReference>
<gene>
    <name evidence="1" type="primary">recF</name>
    <name type="ordered locus">SSU05_2182</name>
</gene>
<reference key="1">
    <citation type="journal article" date="2007" name="PLoS ONE">
        <title>A glimpse of streptococcal toxic shock syndrome from comparative genomics of S. suis 2 Chinese isolates.</title>
        <authorList>
            <person name="Chen C."/>
            <person name="Tang J."/>
            <person name="Dong W."/>
            <person name="Wang C."/>
            <person name="Feng Y."/>
            <person name="Wang J."/>
            <person name="Zheng F."/>
            <person name="Pan X."/>
            <person name="Liu D."/>
            <person name="Li M."/>
            <person name="Song Y."/>
            <person name="Zhu X."/>
            <person name="Sun H."/>
            <person name="Feng T."/>
            <person name="Guo Z."/>
            <person name="Ju A."/>
            <person name="Ge J."/>
            <person name="Dong Y."/>
            <person name="Sun W."/>
            <person name="Jiang Y."/>
            <person name="Wang J."/>
            <person name="Yan J."/>
            <person name="Yang H."/>
            <person name="Wang X."/>
            <person name="Gao G.F."/>
            <person name="Yang R."/>
            <person name="Wang J."/>
            <person name="Yu J."/>
        </authorList>
    </citation>
    <scope>NUCLEOTIDE SEQUENCE [LARGE SCALE GENOMIC DNA]</scope>
    <source>
        <strain>05ZYH33</strain>
    </source>
</reference>
<protein>
    <recommendedName>
        <fullName evidence="1">DNA replication and repair protein RecF</fullName>
    </recommendedName>
</protein>
<sequence>MWLERLELQHFRNYNQLDIEFHKGLNVFLGENAQGKTNILESIYVLALTRSHRTRTDKDLLQFQEKELSISGLLHRTSGKVPLDIHLTDKGRVTKVNHLKQAKLSNYIGHMNVVLFAPEDLQLIKGAPALRRKFIDVELGQIKPLYLSDLSNYNHVLKQRNTYLKSTDKIDENFLSVLDQQLAEYGSRVIQHRIDFLKKLEEFGNRKVQEISGNREELTIEYQTSIELTDDVNLIDKFLTELEKSRKRDLFKKNTGVGPHRDDVAFFINGMNAHYASQGQHRSLVLSLKLAEIELMKEVTREYPILLLDDVMSELDNNRQIKLLETITDTIQTFITTTSLDHLHKLPDSLKIFHIESGKVTESE</sequence>